<sequence>MTNIRKTHPLLKIINSSFVDLPAPSSLSSWWNFGSLLGVCLGVQILTGLFLAMHYTSDTATAFNSVTHICRDVNYGWLLRYLHANGASMFFICLYLHVGRGLYYGSYTYSETWNIGILLLFAVMATAFMGYVLPWGQMSFWGATVITNLLSAIPYIGTDLVQWIWGGFSVDKATLTRFFAFHFLLPFIVTALVMVHLLFLHETGSNNPTGIPSDPDMIPFHPYYTIKDILGFLVMLTALATLVLFSPDLLGDPDNYIPANPLMTPPHIKPEWYFLFAYAILRSIPNKLGGVLALVMSILILAIVPILHMSKQRSMMFRPLSQCLFWLLVAVLFTLTWIGGQPVEHPYIIIGQTASVLYFLIILFLMPMISLVENYLLKW</sequence>
<dbReference type="EMBL" id="U66508">
    <property type="protein sequence ID" value="AAB06783.1"/>
    <property type="molecule type" value="Genomic_DNA"/>
</dbReference>
<dbReference type="SMR" id="Q95745"/>
<dbReference type="GO" id="GO:0005743">
    <property type="term" value="C:mitochondrial inner membrane"/>
    <property type="evidence" value="ECO:0007669"/>
    <property type="project" value="UniProtKB-SubCell"/>
</dbReference>
<dbReference type="GO" id="GO:0045275">
    <property type="term" value="C:respiratory chain complex III"/>
    <property type="evidence" value="ECO:0007669"/>
    <property type="project" value="InterPro"/>
</dbReference>
<dbReference type="GO" id="GO:0046872">
    <property type="term" value="F:metal ion binding"/>
    <property type="evidence" value="ECO:0007669"/>
    <property type="project" value="UniProtKB-KW"/>
</dbReference>
<dbReference type="GO" id="GO:0008121">
    <property type="term" value="F:ubiquinol-cytochrome-c reductase activity"/>
    <property type="evidence" value="ECO:0007669"/>
    <property type="project" value="InterPro"/>
</dbReference>
<dbReference type="GO" id="GO:0006122">
    <property type="term" value="P:mitochondrial electron transport, ubiquinol to cytochrome c"/>
    <property type="evidence" value="ECO:0007669"/>
    <property type="project" value="TreeGrafter"/>
</dbReference>
<dbReference type="CDD" id="cd00290">
    <property type="entry name" value="cytochrome_b_C"/>
    <property type="match status" value="1"/>
</dbReference>
<dbReference type="CDD" id="cd00284">
    <property type="entry name" value="Cytochrome_b_N"/>
    <property type="match status" value="1"/>
</dbReference>
<dbReference type="FunFam" id="1.20.810.10:FF:000002">
    <property type="entry name" value="Cytochrome b"/>
    <property type="match status" value="1"/>
</dbReference>
<dbReference type="Gene3D" id="1.20.810.10">
    <property type="entry name" value="Cytochrome Bc1 Complex, Chain C"/>
    <property type="match status" value="1"/>
</dbReference>
<dbReference type="InterPro" id="IPR005798">
    <property type="entry name" value="Cyt_b/b6_C"/>
</dbReference>
<dbReference type="InterPro" id="IPR036150">
    <property type="entry name" value="Cyt_b/b6_C_sf"/>
</dbReference>
<dbReference type="InterPro" id="IPR005797">
    <property type="entry name" value="Cyt_b/b6_N"/>
</dbReference>
<dbReference type="InterPro" id="IPR027387">
    <property type="entry name" value="Cytb/b6-like_sf"/>
</dbReference>
<dbReference type="InterPro" id="IPR030689">
    <property type="entry name" value="Cytochrome_b"/>
</dbReference>
<dbReference type="InterPro" id="IPR048260">
    <property type="entry name" value="Cytochrome_b_C_euk/bac"/>
</dbReference>
<dbReference type="InterPro" id="IPR048259">
    <property type="entry name" value="Cytochrome_b_N_euk/bac"/>
</dbReference>
<dbReference type="InterPro" id="IPR016174">
    <property type="entry name" value="Di-haem_cyt_TM"/>
</dbReference>
<dbReference type="PANTHER" id="PTHR19271">
    <property type="entry name" value="CYTOCHROME B"/>
    <property type="match status" value="1"/>
</dbReference>
<dbReference type="PANTHER" id="PTHR19271:SF16">
    <property type="entry name" value="CYTOCHROME B"/>
    <property type="match status" value="1"/>
</dbReference>
<dbReference type="Pfam" id="PF00032">
    <property type="entry name" value="Cytochrom_B_C"/>
    <property type="match status" value="1"/>
</dbReference>
<dbReference type="Pfam" id="PF00033">
    <property type="entry name" value="Cytochrome_B"/>
    <property type="match status" value="1"/>
</dbReference>
<dbReference type="PIRSF" id="PIRSF038885">
    <property type="entry name" value="COB"/>
    <property type="match status" value="1"/>
</dbReference>
<dbReference type="SUPFAM" id="SSF81648">
    <property type="entry name" value="a domain/subunit of cytochrome bc1 complex (Ubiquinol-cytochrome c reductase)"/>
    <property type="match status" value="1"/>
</dbReference>
<dbReference type="SUPFAM" id="SSF81342">
    <property type="entry name" value="Transmembrane di-heme cytochromes"/>
    <property type="match status" value="1"/>
</dbReference>
<dbReference type="PROSITE" id="PS51003">
    <property type="entry name" value="CYTB_CTER"/>
    <property type="match status" value="1"/>
</dbReference>
<dbReference type="PROSITE" id="PS51002">
    <property type="entry name" value="CYTB_NTER"/>
    <property type="match status" value="1"/>
</dbReference>
<keyword id="KW-0249">Electron transport</keyword>
<keyword id="KW-0349">Heme</keyword>
<keyword id="KW-0408">Iron</keyword>
<keyword id="KW-0472">Membrane</keyword>
<keyword id="KW-0479">Metal-binding</keyword>
<keyword id="KW-0496">Mitochondrion</keyword>
<keyword id="KW-0999">Mitochondrion inner membrane</keyword>
<keyword id="KW-0679">Respiratory chain</keyword>
<keyword id="KW-0812">Transmembrane</keyword>
<keyword id="KW-1133">Transmembrane helix</keyword>
<keyword id="KW-0813">Transport</keyword>
<keyword id="KW-0830">Ubiquinone</keyword>
<accession>Q95745</accession>
<evidence type="ECO:0000250" key="1"/>
<evidence type="ECO:0000250" key="2">
    <source>
        <dbReference type="UniProtKB" id="P00157"/>
    </source>
</evidence>
<evidence type="ECO:0000255" key="3">
    <source>
        <dbReference type="PROSITE-ProRule" id="PRU00967"/>
    </source>
</evidence>
<evidence type="ECO:0000255" key="4">
    <source>
        <dbReference type="PROSITE-ProRule" id="PRU00968"/>
    </source>
</evidence>
<comment type="function">
    <text evidence="2">Component of the ubiquinol-cytochrome c reductase complex (complex III or cytochrome b-c1 complex) that is part of the mitochondrial respiratory chain. The b-c1 complex mediates electron transfer from ubiquinol to cytochrome c. Contributes to the generation of a proton gradient across the mitochondrial membrane that is then used for ATP synthesis.</text>
</comment>
<comment type="cofactor">
    <cofactor evidence="2">
        <name>heme b</name>
        <dbReference type="ChEBI" id="CHEBI:60344"/>
    </cofactor>
    <text evidence="2">Binds 2 heme b groups non-covalently.</text>
</comment>
<comment type="subunit">
    <text evidence="2">The cytochrome bc1 complex contains 11 subunits: 3 respiratory subunits (MT-CYB, CYC1 and UQCRFS1), 2 core proteins (UQCRC1 and UQCRC2) and 6 low-molecular weight proteins (UQCRH/QCR6, UQCRB/QCR7, UQCRQ/QCR8, UQCR10/QCR9, UQCR11/QCR10 and a cleavage product of UQCRFS1). This cytochrome bc1 complex then forms a dimer.</text>
</comment>
<comment type="subcellular location">
    <subcellularLocation>
        <location evidence="2">Mitochondrion inner membrane</location>
        <topology evidence="2">Multi-pass membrane protein</topology>
    </subcellularLocation>
</comment>
<comment type="miscellaneous">
    <text evidence="1">Heme 1 (or BL or b562) is low-potential and absorbs at about 562 nm, and heme 2 (or BH or b566) is high-potential and absorbs at about 566 nm.</text>
</comment>
<comment type="similarity">
    <text evidence="3 4">Belongs to the cytochrome b family.</text>
</comment>
<comment type="caution">
    <text evidence="2">The full-length protein contains only eight transmembrane helices, not nine as predicted by bioinformatics tools.</text>
</comment>
<feature type="chain" id="PRO_0000060640" description="Cytochrome b">
    <location>
        <begin position="1"/>
        <end position="379"/>
    </location>
</feature>
<feature type="transmembrane region" description="Helical" evidence="2">
    <location>
        <begin position="33"/>
        <end position="53"/>
    </location>
</feature>
<feature type="transmembrane region" description="Helical" evidence="2">
    <location>
        <begin position="77"/>
        <end position="98"/>
    </location>
</feature>
<feature type="transmembrane region" description="Helical" evidence="2">
    <location>
        <begin position="113"/>
        <end position="133"/>
    </location>
</feature>
<feature type="transmembrane region" description="Helical" evidence="2">
    <location>
        <begin position="178"/>
        <end position="198"/>
    </location>
</feature>
<feature type="transmembrane region" description="Helical" evidence="2">
    <location>
        <begin position="226"/>
        <end position="246"/>
    </location>
</feature>
<feature type="transmembrane region" description="Helical" evidence="2">
    <location>
        <begin position="288"/>
        <end position="308"/>
    </location>
</feature>
<feature type="transmembrane region" description="Helical" evidence="2">
    <location>
        <begin position="320"/>
        <end position="340"/>
    </location>
</feature>
<feature type="transmembrane region" description="Helical" evidence="2">
    <location>
        <begin position="347"/>
        <end position="367"/>
    </location>
</feature>
<feature type="binding site" description="axial binding residue" evidence="2">
    <location>
        <position position="83"/>
    </location>
    <ligand>
        <name>heme b</name>
        <dbReference type="ChEBI" id="CHEBI:60344"/>
        <label>b562</label>
    </ligand>
    <ligandPart>
        <name>Fe</name>
        <dbReference type="ChEBI" id="CHEBI:18248"/>
    </ligandPart>
</feature>
<feature type="binding site" description="axial binding residue" evidence="2">
    <location>
        <position position="97"/>
    </location>
    <ligand>
        <name>heme b</name>
        <dbReference type="ChEBI" id="CHEBI:60344"/>
        <label>b566</label>
    </ligand>
    <ligandPart>
        <name>Fe</name>
        <dbReference type="ChEBI" id="CHEBI:18248"/>
    </ligandPart>
</feature>
<feature type="binding site" description="axial binding residue" evidence="2">
    <location>
        <position position="182"/>
    </location>
    <ligand>
        <name>heme b</name>
        <dbReference type="ChEBI" id="CHEBI:60344"/>
        <label>b562</label>
    </ligand>
    <ligandPart>
        <name>Fe</name>
        <dbReference type="ChEBI" id="CHEBI:18248"/>
    </ligandPart>
</feature>
<feature type="binding site" description="axial binding residue" evidence="2">
    <location>
        <position position="196"/>
    </location>
    <ligand>
        <name>heme b</name>
        <dbReference type="ChEBI" id="CHEBI:60344"/>
        <label>b566</label>
    </ligand>
    <ligandPart>
        <name>Fe</name>
        <dbReference type="ChEBI" id="CHEBI:18248"/>
    </ligandPart>
</feature>
<feature type="binding site" evidence="2">
    <location>
        <position position="201"/>
    </location>
    <ligand>
        <name>a ubiquinone</name>
        <dbReference type="ChEBI" id="CHEBI:16389"/>
    </ligand>
</feature>
<gene>
    <name type="primary">MT-CYB</name>
    <name type="synonym">COB</name>
    <name type="synonym">CYTB</name>
    <name type="synonym">MTCYB</name>
</gene>
<reference key="1">
    <citation type="submission" date="1996-08" db="EMBL/GenBank/DDBJ databases">
        <title>Phylogenetic accuracy, stability, and congruence: relationships within and among the New World bat genera Artibeus, Dermanura, and Koopmania.</title>
        <authorList>
            <person name="den Bussche R.A."/>
            <person name="Hudgeons J.L."/>
            <person name="Baker R.J."/>
        </authorList>
    </citation>
    <scope>NUCLEOTIDE SEQUENCE [GENOMIC DNA]</scope>
    <source>
        <strain>Isolate TK 16633 / MVZ 170016</strain>
    </source>
</reference>
<geneLocation type="mitochondrion"/>
<protein>
    <recommendedName>
        <fullName>Cytochrome b</fullName>
    </recommendedName>
    <alternativeName>
        <fullName>Complex III subunit 3</fullName>
    </alternativeName>
    <alternativeName>
        <fullName>Complex III subunit III</fullName>
    </alternativeName>
    <alternativeName>
        <fullName>Cytochrome b-c1 complex subunit 3</fullName>
    </alternativeName>
    <alternativeName>
        <fullName>Ubiquinol-cytochrome-c reductase complex cytochrome b subunit</fullName>
    </alternativeName>
</protein>
<organism>
    <name type="scientific">Artibeus planirostris</name>
    <name type="common">Flat-faced fruit-eating bat</name>
    <dbReference type="NCBI Taxonomy" id="40230"/>
    <lineage>
        <taxon>Eukaryota</taxon>
        <taxon>Metazoa</taxon>
        <taxon>Chordata</taxon>
        <taxon>Craniata</taxon>
        <taxon>Vertebrata</taxon>
        <taxon>Euteleostomi</taxon>
        <taxon>Mammalia</taxon>
        <taxon>Eutheria</taxon>
        <taxon>Laurasiatheria</taxon>
        <taxon>Chiroptera</taxon>
        <taxon>Yangochiroptera</taxon>
        <taxon>Phyllostomidae</taxon>
        <taxon>Stenodermatinae</taxon>
        <taxon>Artibeus</taxon>
    </lineage>
</organism>
<name>CYB_ARTPL</name>
<proteinExistence type="inferred from homology"/>